<keyword id="KW-0012">Acyltransferase</keyword>
<keyword id="KW-0052">Apoplast</keyword>
<keyword id="KW-0325">Glycoprotein</keyword>
<keyword id="KW-0378">Hydrolase</keyword>
<keyword id="KW-1185">Reference proteome</keyword>
<keyword id="KW-0964">Secreted</keyword>
<keyword id="KW-0732">Signal</keyword>
<keyword id="KW-0808">Transferase</keyword>
<feature type="signal peptide" evidence="2">
    <location>
        <begin position="1"/>
        <end position="26"/>
    </location>
</feature>
<feature type="chain" id="PRO_0000420912" description="Glutathione hydrolase 2">
    <location>
        <begin position="27"/>
        <end position="578"/>
    </location>
</feature>
<feature type="active site" description="Nucleophile" evidence="1">
    <location>
        <position position="374"/>
    </location>
</feature>
<feature type="binding site" evidence="1">
    <location>
        <position position="103"/>
    </location>
    <ligand>
        <name>L-glutamate</name>
        <dbReference type="ChEBI" id="CHEBI:29985"/>
    </ligand>
</feature>
<feature type="binding site" evidence="1">
    <location>
        <position position="392"/>
    </location>
    <ligand>
        <name>L-glutamate</name>
        <dbReference type="ChEBI" id="CHEBI:29985"/>
    </ligand>
</feature>
<feature type="binding site" evidence="1">
    <location>
        <position position="394"/>
    </location>
    <ligand>
        <name>L-glutamate</name>
        <dbReference type="ChEBI" id="CHEBI:29985"/>
    </ligand>
</feature>
<feature type="binding site" evidence="1">
    <location>
        <position position="413"/>
    </location>
    <ligand>
        <name>L-glutamate</name>
        <dbReference type="ChEBI" id="CHEBI:29985"/>
    </ligand>
</feature>
<feature type="binding site" evidence="1">
    <location>
        <position position="416"/>
    </location>
    <ligand>
        <name>L-glutamate</name>
        <dbReference type="ChEBI" id="CHEBI:29985"/>
    </ligand>
</feature>
<feature type="binding site" evidence="1">
    <location>
        <begin position="446"/>
        <end position="447"/>
    </location>
    <ligand>
        <name>L-glutamate</name>
        <dbReference type="ChEBI" id="CHEBI:29985"/>
    </ligand>
</feature>
<feature type="binding site" evidence="1">
    <location>
        <begin position="467"/>
        <end position="468"/>
    </location>
    <ligand>
        <name>L-glutamate</name>
        <dbReference type="ChEBI" id="CHEBI:29985"/>
    </ligand>
</feature>
<feature type="glycosylation site" description="N-linked (GlcNAc...) asparagine" evidence="2">
    <location>
        <position position="94"/>
    </location>
</feature>
<feature type="glycosylation site" description="N-linked (GlcNAc...) asparagine" evidence="2">
    <location>
        <position position="176"/>
    </location>
</feature>
<feature type="glycosylation site" description="N-linked (GlcNAc...) asparagine" evidence="2">
    <location>
        <position position="227"/>
    </location>
</feature>
<feature type="glycosylation site" description="N-linked (GlcNAc...) asparagine" evidence="2">
    <location>
        <position position="511"/>
    </location>
</feature>
<evidence type="ECO:0000250" key="1"/>
<evidence type="ECO:0000255" key="2"/>
<evidence type="ECO:0000269" key="3">
    <source>
    </source>
</evidence>
<evidence type="ECO:0000269" key="4">
    <source>
    </source>
</evidence>
<evidence type="ECO:0000269" key="5">
    <source>
    </source>
</evidence>
<evidence type="ECO:0000305" key="6"/>
<protein>
    <recommendedName>
        <fullName>Glutathione hydrolase 2</fullName>
        <ecNumber>3.4.19.13</ecNumber>
    </recommendedName>
    <alternativeName>
        <fullName>Gamma-glutamyltransferase 2</fullName>
    </alternativeName>
    <alternativeName>
        <fullName>Gamma-glutamyltranspeptidase 2</fullName>
        <ecNumber>2.3.2.2</ecNumber>
    </alternativeName>
</protein>
<dbReference type="EC" id="3.4.19.13"/>
<dbReference type="EC" id="2.3.2.2"/>
<dbReference type="EMBL" id="AL022605">
    <property type="protein sequence ID" value="CAA18751.1"/>
    <property type="status" value="ALT_SEQ"/>
    <property type="molecule type" value="Genomic_DNA"/>
</dbReference>
<dbReference type="EMBL" id="AL161595">
    <property type="protein sequence ID" value="CAB80628.1"/>
    <property type="status" value="ALT_SEQ"/>
    <property type="molecule type" value="Genomic_DNA"/>
</dbReference>
<dbReference type="EMBL" id="CP002687">
    <property type="protein sequence ID" value="AEE87099.1"/>
    <property type="molecule type" value="Genomic_DNA"/>
</dbReference>
<dbReference type="EMBL" id="AK175882">
    <property type="protein sequence ID" value="BAD43645.1"/>
    <property type="molecule type" value="mRNA"/>
</dbReference>
<dbReference type="EMBL" id="AK220806">
    <property type="protein sequence ID" value="BAD94075.1"/>
    <property type="molecule type" value="mRNA"/>
</dbReference>
<dbReference type="EMBL" id="BT012661">
    <property type="protein sequence ID" value="AAT06480.1"/>
    <property type="molecule type" value="mRNA"/>
</dbReference>
<dbReference type="PIR" id="T05002">
    <property type="entry name" value="T05002"/>
</dbReference>
<dbReference type="RefSeq" id="NP_195675.2">
    <property type="nucleotide sequence ID" value="NM_120125.2"/>
</dbReference>
<dbReference type="SMR" id="Q680I5"/>
<dbReference type="FunCoup" id="Q680I5">
    <property type="interactions" value="670"/>
</dbReference>
<dbReference type="STRING" id="3702.Q680I5"/>
<dbReference type="MEROPS" id="T03.A03"/>
<dbReference type="GlyCosmos" id="Q680I5">
    <property type="glycosylation" value="4 sites, No reported glycans"/>
</dbReference>
<dbReference type="GlyGen" id="Q680I5">
    <property type="glycosylation" value="4 sites"/>
</dbReference>
<dbReference type="PaxDb" id="3702-AT4G39650.1"/>
<dbReference type="ProteomicsDB" id="247357"/>
<dbReference type="EnsemblPlants" id="AT4G39650.1">
    <property type="protein sequence ID" value="AT4G39650.1"/>
    <property type="gene ID" value="AT4G39650"/>
</dbReference>
<dbReference type="GeneID" id="830119"/>
<dbReference type="Gramene" id="AT4G39650.1">
    <property type="protein sequence ID" value="AT4G39650.1"/>
    <property type="gene ID" value="AT4G39650"/>
</dbReference>
<dbReference type="KEGG" id="ath:AT4G39650"/>
<dbReference type="Araport" id="AT4G39650"/>
<dbReference type="TAIR" id="AT4G39650">
    <property type="gene designation" value="GGT2"/>
</dbReference>
<dbReference type="eggNOG" id="KOG2410">
    <property type="taxonomic scope" value="Eukaryota"/>
</dbReference>
<dbReference type="HOGENOM" id="CLU_014813_4_3_1"/>
<dbReference type="InParanoid" id="Q680I5"/>
<dbReference type="OMA" id="HQIFPMH"/>
<dbReference type="PhylomeDB" id="Q680I5"/>
<dbReference type="BioCyc" id="ARA:AT4G39650-MONOMER"/>
<dbReference type="BRENDA" id="2.3.2.2">
    <property type="organism ID" value="399"/>
</dbReference>
<dbReference type="UniPathway" id="UPA00204"/>
<dbReference type="PRO" id="PR:Q680I5"/>
<dbReference type="Proteomes" id="UP000006548">
    <property type="component" value="Chromosome 4"/>
</dbReference>
<dbReference type="ExpressionAtlas" id="Q680I5">
    <property type="expression patterns" value="baseline and differential"/>
</dbReference>
<dbReference type="GO" id="GO:0048046">
    <property type="term" value="C:apoplast"/>
    <property type="evidence" value="ECO:0000314"/>
    <property type="project" value="TAIR"/>
</dbReference>
<dbReference type="GO" id="GO:0005886">
    <property type="term" value="C:plasma membrane"/>
    <property type="evidence" value="ECO:0000314"/>
    <property type="project" value="TAIR"/>
</dbReference>
<dbReference type="GO" id="GO:0016756">
    <property type="term" value="F:glutathione gamma-glutamylcysteinyltransferase activity"/>
    <property type="evidence" value="ECO:0000314"/>
    <property type="project" value="TAIR"/>
</dbReference>
<dbReference type="GO" id="GO:0036374">
    <property type="term" value="F:glutathione hydrolase activity"/>
    <property type="evidence" value="ECO:0007669"/>
    <property type="project" value="UniProtKB-EC"/>
</dbReference>
<dbReference type="GO" id="GO:0103068">
    <property type="term" value="F:leukotriene C4 gamma-glutamyl transferase activity"/>
    <property type="evidence" value="ECO:0007669"/>
    <property type="project" value="UniProtKB-EC"/>
</dbReference>
<dbReference type="GO" id="GO:0006751">
    <property type="term" value="P:glutathione catabolic process"/>
    <property type="evidence" value="ECO:0000314"/>
    <property type="project" value="TAIR"/>
</dbReference>
<dbReference type="GO" id="GO:0034775">
    <property type="term" value="P:glutathione transmembrane transport"/>
    <property type="evidence" value="ECO:0000315"/>
    <property type="project" value="TAIR"/>
</dbReference>
<dbReference type="FunFam" id="1.10.246.130:FF:000001">
    <property type="entry name" value="Gamma-glutamyltransferase 5 isoform 1"/>
    <property type="match status" value="1"/>
</dbReference>
<dbReference type="FunFam" id="3.60.20.40:FF:000004">
    <property type="entry name" value="Glutathione hydrolase 1"/>
    <property type="match status" value="1"/>
</dbReference>
<dbReference type="Gene3D" id="1.10.246.130">
    <property type="match status" value="1"/>
</dbReference>
<dbReference type="Gene3D" id="3.60.20.40">
    <property type="match status" value="1"/>
</dbReference>
<dbReference type="InterPro" id="IPR043138">
    <property type="entry name" value="GGT_lsub_C"/>
</dbReference>
<dbReference type="InterPro" id="IPR000101">
    <property type="entry name" value="GGT_peptidase"/>
</dbReference>
<dbReference type="InterPro" id="IPR043137">
    <property type="entry name" value="GGT_ssub"/>
</dbReference>
<dbReference type="InterPro" id="IPR029055">
    <property type="entry name" value="Ntn_hydrolases_N"/>
</dbReference>
<dbReference type="NCBIfam" id="TIGR00066">
    <property type="entry name" value="g_glut_trans"/>
    <property type="match status" value="1"/>
</dbReference>
<dbReference type="PANTHER" id="PTHR11686">
    <property type="entry name" value="GAMMA GLUTAMYL TRANSPEPTIDASE"/>
    <property type="match status" value="1"/>
</dbReference>
<dbReference type="PANTHER" id="PTHR11686:SF34">
    <property type="entry name" value="GLUTATHIONE HYDROLASE 1-RELATED"/>
    <property type="match status" value="1"/>
</dbReference>
<dbReference type="Pfam" id="PF01019">
    <property type="entry name" value="G_glu_transpept"/>
    <property type="match status" value="1"/>
</dbReference>
<dbReference type="PRINTS" id="PR01210">
    <property type="entry name" value="GGTRANSPTASE"/>
</dbReference>
<dbReference type="SUPFAM" id="SSF56235">
    <property type="entry name" value="N-terminal nucleophile aminohydrolases (Ntn hydrolases)"/>
    <property type="match status" value="1"/>
</dbReference>
<name>GAGT2_ARATH</name>
<organism>
    <name type="scientific">Arabidopsis thaliana</name>
    <name type="common">Mouse-ear cress</name>
    <dbReference type="NCBI Taxonomy" id="3702"/>
    <lineage>
        <taxon>Eukaryota</taxon>
        <taxon>Viridiplantae</taxon>
        <taxon>Streptophyta</taxon>
        <taxon>Embryophyta</taxon>
        <taxon>Tracheophyta</taxon>
        <taxon>Spermatophyta</taxon>
        <taxon>Magnoliopsida</taxon>
        <taxon>eudicotyledons</taxon>
        <taxon>Gunneridae</taxon>
        <taxon>Pentapetalae</taxon>
        <taxon>rosids</taxon>
        <taxon>malvids</taxon>
        <taxon>Brassicales</taxon>
        <taxon>Brassicaceae</taxon>
        <taxon>Camelineae</taxon>
        <taxon>Arabidopsis</taxon>
    </lineage>
</organism>
<sequence length="578" mass="61600">MNSFMSLVRTATIALLLIAFLQNANAVKNLQSIVAYHGAVATDDGRCSAIGTNVLRQGGNAIDASVAAALCLGVVSPASSGIGGGAFTMIKLANGTEVAYDSRETAPLSATEDMYGDNPERKKKGSLSVGVPGEVAGLYTAWTQHGKLPWKQLVEPAEKLAAEGFKISKYLYMQMNATRSDILADKGLSELFVSNGELKKPGAICRNPKLADTLSQIAEYGPKAFYNGTVGFNLVSDIQKAGGIITLKDLQNYNVKVKEPLSTEILGYRLLGMPPPSSGGPAMMLILNILAQYGIPSGVSGPLGVHRLVEALKHAFAVRMNLGDPDFVPEVTNVVADMLSPKFAQDLKSKINDEKTFDPKYYGGKWGQIKDHGTSHLSIIDSERNAVSMTSTINGYFGAIMLSPSTGIVLNNEMDDFSIPTKSGGDPDVPPPAPANFIRPGKRPLSSMTPTIVLKDGKVKAALGASGGMYIIAGTTQVYLNHFFLNMDPLSSVVAPRIYHQLIPNKASYENWTTVYSDHFEIPEEIRLVLEKKGQVLTPIAGGTISQLIVEQSDGKSGGISKLVAVSDPRKGGFPSGY</sequence>
<comment type="function">
    <text evidence="6">May be required for glutathione transport into developing seeds.</text>
</comment>
<comment type="catalytic activity">
    <reaction>
        <text>an N-terminal (5-L-glutamyl)-[peptide] + an alpha-amino acid = 5-L-glutamyl amino acid + an N-terminal L-alpha-aminoacyl-[peptide]</text>
        <dbReference type="Rhea" id="RHEA:23904"/>
        <dbReference type="Rhea" id="RHEA-COMP:9780"/>
        <dbReference type="Rhea" id="RHEA-COMP:9795"/>
        <dbReference type="ChEBI" id="CHEBI:77644"/>
        <dbReference type="ChEBI" id="CHEBI:78597"/>
        <dbReference type="ChEBI" id="CHEBI:78599"/>
        <dbReference type="ChEBI" id="CHEBI:78608"/>
        <dbReference type="EC" id="2.3.2.2"/>
    </reaction>
</comment>
<comment type="catalytic activity">
    <reaction>
        <text>glutathione + H2O = L-cysteinylglycine + L-glutamate</text>
        <dbReference type="Rhea" id="RHEA:28807"/>
        <dbReference type="ChEBI" id="CHEBI:15377"/>
        <dbReference type="ChEBI" id="CHEBI:29985"/>
        <dbReference type="ChEBI" id="CHEBI:57925"/>
        <dbReference type="ChEBI" id="CHEBI:61694"/>
        <dbReference type="EC" id="3.4.19.13"/>
    </reaction>
</comment>
<comment type="catalytic activity">
    <reaction>
        <text>an S-substituted glutathione + H2O = an S-substituted L-cysteinylglycine + L-glutamate</text>
        <dbReference type="Rhea" id="RHEA:59468"/>
        <dbReference type="ChEBI" id="CHEBI:15377"/>
        <dbReference type="ChEBI" id="CHEBI:29985"/>
        <dbReference type="ChEBI" id="CHEBI:90779"/>
        <dbReference type="ChEBI" id="CHEBI:143103"/>
        <dbReference type="EC" id="3.4.19.13"/>
    </reaction>
</comment>
<comment type="pathway">
    <text>Sulfur metabolism; glutathione metabolism.</text>
</comment>
<comment type="subcellular location">
    <subcellularLocation>
        <location evidence="3">Secreted</location>
        <location evidence="3">Extracellular space</location>
        <location evidence="3">Apoplast</location>
    </subcellularLocation>
    <text>Associated with the plasma membrane and cell wall.</text>
</comment>
<comment type="tissue specificity">
    <text evidence="3 4 5">Expressed in roots, immature trichomes and pollen. In developing siliques, specifically expressed in the embryo, endosperm, outer integument and a small portion of the funiculus.</text>
</comment>
<comment type="induction">
    <text evidence="5">By glutathione.</text>
</comment>
<comment type="disruption phenotype">
    <text evidence="3 5">No visible phenotype under normal growth conditions.</text>
</comment>
<comment type="similarity">
    <text evidence="6">Belongs to the gamma-glutamyltransferase family.</text>
</comment>
<comment type="sequence caution" evidence="6">
    <conflict type="erroneous gene model prediction">
        <sequence resource="EMBL-CDS" id="CAA18751"/>
    </conflict>
</comment>
<comment type="sequence caution" evidence="6">
    <conflict type="erroneous gene model prediction">
        <sequence resource="EMBL-CDS" id="CAB80628"/>
    </conflict>
</comment>
<proteinExistence type="evidence at transcript level"/>
<reference key="1">
    <citation type="journal article" date="1999" name="Nature">
        <title>Sequence and analysis of chromosome 4 of the plant Arabidopsis thaliana.</title>
        <authorList>
            <person name="Mayer K.F.X."/>
            <person name="Schueller C."/>
            <person name="Wambutt R."/>
            <person name="Murphy G."/>
            <person name="Volckaert G."/>
            <person name="Pohl T."/>
            <person name="Duesterhoeft A."/>
            <person name="Stiekema W."/>
            <person name="Entian K.-D."/>
            <person name="Terryn N."/>
            <person name="Harris B."/>
            <person name="Ansorge W."/>
            <person name="Brandt P."/>
            <person name="Grivell L.A."/>
            <person name="Rieger M."/>
            <person name="Weichselgartner M."/>
            <person name="de Simone V."/>
            <person name="Obermaier B."/>
            <person name="Mache R."/>
            <person name="Mueller M."/>
            <person name="Kreis M."/>
            <person name="Delseny M."/>
            <person name="Puigdomenech P."/>
            <person name="Watson M."/>
            <person name="Schmidtheini T."/>
            <person name="Reichert B."/>
            <person name="Portetelle D."/>
            <person name="Perez-Alonso M."/>
            <person name="Boutry M."/>
            <person name="Bancroft I."/>
            <person name="Vos P."/>
            <person name="Hoheisel J."/>
            <person name="Zimmermann W."/>
            <person name="Wedler H."/>
            <person name="Ridley P."/>
            <person name="Langham S.-A."/>
            <person name="McCullagh B."/>
            <person name="Bilham L."/>
            <person name="Robben J."/>
            <person name="van der Schueren J."/>
            <person name="Grymonprez B."/>
            <person name="Chuang Y.-J."/>
            <person name="Vandenbussche F."/>
            <person name="Braeken M."/>
            <person name="Weltjens I."/>
            <person name="Voet M."/>
            <person name="Bastiaens I."/>
            <person name="Aert R."/>
            <person name="Defoor E."/>
            <person name="Weitzenegger T."/>
            <person name="Bothe G."/>
            <person name="Ramsperger U."/>
            <person name="Hilbert H."/>
            <person name="Braun M."/>
            <person name="Holzer E."/>
            <person name="Brandt A."/>
            <person name="Peters S."/>
            <person name="van Staveren M."/>
            <person name="Dirkse W."/>
            <person name="Mooijman P."/>
            <person name="Klein Lankhorst R."/>
            <person name="Rose M."/>
            <person name="Hauf J."/>
            <person name="Koetter P."/>
            <person name="Berneiser S."/>
            <person name="Hempel S."/>
            <person name="Feldpausch M."/>
            <person name="Lamberth S."/>
            <person name="Van den Daele H."/>
            <person name="De Keyser A."/>
            <person name="Buysshaert C."/>
            <person name="Gielen J."/>
            <person name="Villarroel R."/>
            <person name="De Clercq R."/>
            <person name="van Montagu M."/>
            <person name="Rogers J."/>
            <person name="Cronin A."/>
            <person name="Quail M.A."/>
            <person name="Bray-Allen S."/>
            <person name="Clark L."/>
            <person name="Doggett J."/>
            <person name="Hall S."/>
            <person name="Kay M."/>
            <person name="Lennard N."/>
            <person name="McLay K."/>
            <person name="Mayes R."/>
            <person name="Pettett A."/>
            <person name="Rajandream M.A."/>
            <person name="Lyne M."/>
            <person name="Benes V."/>
            <person name="Rechmann S."/>
            <person name="Borkova D."/>
            <person name="Bloecker H."/>
            <person name="Scharfe M."/>
            <person name="Grimm M."/>
            <person name="Loehnert T.-H."/>
            <person name="Dose S."/>
            <person name="de Haan M."/>
            <person name="Maarse A.C."/>
            <person name="Schaefer M."/>
            <person name="Mueller-Auer S."/>
            <person name="Gabel C."/>
            <person name="Fuchs M."/>
            <person name="Fartmann B."/>
            <person name="Granderath K."/>
            <person name="Dauner D."/>
            <person name="Herzl A."/>
            <person name="Neumann S."/>
            <person name="Argiriou A."/>
            <person name="Vitale D."/>
            <person name="Liguori R."/>
            <person name="Piravandi E."/>
            <person name="Massenet O."/>
            <person name="Quigley F."/>
            <person name="Clabauld G."/>
            <person name="Muendlein A."/>
            <person name="Felber R."/>
            <person name="Schnabl S."/>
            <person name="Hiller R."/>
            <person name="Schmidt W."/>
            <person name="Lecharny A."/>
            <person name="Aubourg S."/>
            <person name="Chefdor F."/>
            <person name="Cooke R."/>
            <person name="Berger C."/>
            <person name="Monfort A."/>
            <person name="Casacuberta E."/>
            <person name="Gibbons T."/>
            <person name="Weber N."/>
            <person name="Vandenbol M."/>
            <person name="Bargues M."/>
            <person name="Terol J."/>
            <person name="Torres A."/>
            <person name="Perez-Perez A."/>
            <person name="Purnelle B."/>
            <person name="Bent E."/>
            <person name="Johnson S."/>
            <person name="Tacon D."/>
            <person name="Jesse T."/>
            <person name="Heijnen L."/>
            <person name="Schwarz S."/>
            <person name="Scholler P."/>
            <person name="Heber S."/>
            <person name="Francs P."/>
            <person name="Bielke C."/>
            <person name="Frishman D."/>
            <person name="Haase D."/>
            <person name="Lemcke K."/>
            <person name="Mewes H.-W."/>
            <person name="Stocker S."/>
            <person name="Zaccaria P."/>
            <person name="Bevan M."/>
            <person name="Wilson R.K."/>
            <person name="de la Bastide M."/>
            <person name="Habermann K."/>
            <person name="Parnell L."/>
            <person name="Dedhia N."/>
            <person name="Gnoj L."/>
            <person name="Schutz K."/>
            <person name="Huang E."/>
            <person name="Spiegel L."/>
            <person name="Sekhon M."/>
            <person name="Murray J."/>
            <person name="Sheet P."/>
            <person name="Cordes M."/>
            <person name="Abu-Threideh J."/>
            <person name="Stoneking T."/>
            <person name="Kalicki J."/>
            <person name="Graves T."/>
            <person name="Harmon G."/>
            <person name="Edwards J."/>
            <person name="Latreille P."/>
            <person name="Courtney L."/>
            <person name="Cloud J."/>
            <person name="Abbott A."/>
            <person name="Scott K."/>
            <person name="Johnson D."/>
            <person name="Minx P."/>
            <person name="Bentley D."/>
            <person name="Fulton B."/>
            <person name="Miller N."/>
            <person name="Greco T."/>
            <person name="Kemp K."/>
            <person name="Kramer J."/>
            <person name="Fulton L."/>
            <person name="Mardis E."/>
            <person name="Dante M."/>
            <person name="Pepin K."/>
            <person name="Hillier L.W."/>
            <person name="Nelson J."/>
            <person name="Spieth J."/>
            <person name="Ryan E."/>
            <person name="Andrews S."/>
            <person name="Geisel C."/>
            <person name="Layman D."/>
            <person name="Du H."/>
            <person name="Ali J."/>
            <person name="Berghoff A."/>
            <person name="Jones K."/>
            <person name="Drone K."/>
            <person name="Cotton M."/>
            <person name="Joshu C."/>
            <person name="Antonoiu B."/>
            <person name="Zidanic M."/>
            <person name="Strong C."/>
            <person name="Sun H."/>
            <person name="Lamar B."/>
            <person name="Yordan C."/>
            <person name="Ma P."/>
            <person name="Zhong J."/>
            <person name="Preston R."/>
            <person name="Vil D."/>
            <person name="Shekher M."/>
            <person name="Matero A."/>
            <person name="Shah R."/>
            <person name="Swaby I.K."/>
            <person name="O'Shaughnessy A."/>
            <person name="Rodriguez M."/>
            <person name="Hoffman J."/>
            <person name="Till S."/>
            <person name="Granat S."/>
            <person name="Shohdy N."/>
            <person name="Hasegawa A."/>
            <person name="Hameed A."/>
            <person name="Lodhi M."/>
            <person name="Johnson A."/>
            <person name="Chen E."/>
            <person name="Marra M.A."/>
            <person name="Martienssen R."/>
            <person name="McCombie W.R."/>
        </authorList>
    </citation>
    <scope>NUCLEOTIDE SEQUENCE [LARGE SCALE GENOMIC DNA]</scope>
    <source>
        <strain>cv. Columbia</strain>
    </source>
</reference>
<reference key="2">
    <citation type="journal article" date="2017" name="Plant J.">
        <title>Araport11: a complete reannotation of the Arabidopsis thaliana reference genome.</title>
        <authorList>
            <person name="Cheng C.Y."/>
            <person name="Krishnakumar V."/>
            <person name="Chan A.P."/>
            <person name="Thibaud-Nissen F."/>
            <person name="Schobel S."/>
            <person name="Town C.D."/>
        </authorList>
    </citation>
    <scope>GENOME REANNOTATION</scope>
    <source>
        <strain>cv. Columbia</strain>
    </source>
</reference>
<reference key="3">
    <citation type="submission" date="2004-09" db="EMBL/GenBank/DDBJ databases">
        <title>Large-scale analysis of RIKEN Arabidopsis full-length (RAFL) cDNAs.</title>
        <authorList>
            <person name="Totoki Y."/>
            <person name="Seki M."/>
            <person name="Ishida J."/>
            <person name="Nakajima M."/>
            <person name="Enju A."/>
            <person name="Kamiya A."/>
            <person name="Narusaka M."/>
            <person name="Shin-i T."/>
            <person name="Nakagawa M."/>
            <person name="Sakamoto N."/>
            <person name="Oishi K."/>
            <person name="Kohara Y."/>
            <person name="Kobayashi M."/>
            <person name="Toyoda A."/>
            <person name="Sakaki Y."/>
            <person name="Sakurai T."/>
            <person name="Iida K."/>
            <person name="Akiyama K."/>
            <person name="Satou M."/>
            <person name="Toyoda T."/>
            <person name="Konagaya A."/>
            <person name="Carninci P."/>
            <person name="Kawai J."/>
            <person name="Hayashizaki Y."/>
            <person name="Shinozaki K."/>
        </authorList>
    </citation>
    <scope>NUCLEOTIDE SEQUENCE [LARGE SCALE MRNA]</scope>
    <source>
        <strain>cv. Columbia</strain>
    </source>
</reference>
<reference key="4">
    <citation type="submission" date="2004-05" db="EMBL/GenBank/DDBJ databases">
        <title>Arabidopsis ORF clones.</title>
        <authorList>
            <person name="Cheuk R.F."/>
            <person name="Chen H."/>
            <person name="Kim C.J."/>
            <person name="Shinn P."/>
            <person name="Carninci P."/>
            <person name="Hayashizaki Y."/>
            <person name="Ishida J."/>
            <person name="Kamiya A."/>
            <person name="Kawai J."/>
            <person name="Narusaka M."/>
            <person name="Sakurai T."/>
            <person name="Satou M."/>
            <person name="Seki M."/>
            <person name="Shinozaki K."/>
            <person name="Ecker J.R."/>
        </authorList>
    </citation>
    <scope>NUCLEOTIDE SEQUENCE [LARGE SCALE MRNA] OF 5-578</scope>
    <source>
        <strain>cv. Columbia</strain>
    </source>
</reference>
<reference key="5">
    <citation type="journal article" date="2007" name="Plant J.">
        <title>Characterization of the extracellular gamma-glutamyl transpeptidases, GGT1 and GGT2, in Arabidopsis.</title>
        <authorList>
            <person name="Ohkama-Ohtsu N."/>
            <person name="Radwan S."/>
            <person name="Peterson A."/>
            <person name="Zhao P."/>
            <person name="Badr A.F."/>
            <person name="Xiang C."/>
            <person name="Oliver D.J."/>
        </authorList>
    </citation>
    <scope>SUBCELLULAR LOCATION</scope>
    <scope>TISSUE SPECIFICITY</scope>
    <scope>DISRUPTION PHENOTYPE</scope>
</reference>
<reference key="6">
    <citation type="journal article" date="2007" name="Plant Physiol.">
        <title>Localization of members of the gamma-glutamyl transpeptidase family identifies sites of glutathione and glutathione S-conjugate hydrolysis.</title>
        <authorList>
            <person name="Martin M.N."/>
            <person name="Saladores P.H."/>
            <person name="Lambert E."/>
            <person name="Hudson A.O."/>
            <person name="Leustek T."/>
        </authorList>
    </citation>
    <scope>TISSUE SPECIFICITY</scope>
</reference>
<reference key="7">
    <citation type="journal article" date="2011" name="J. Exp. Bot.">
        <title>Compensatory expression and substrate inducibility of gamma-glutamyl transferase GGT2 isoform in Arabidopsis thaliana.</title>
        <authorList>
            <person name="Destro T."/>
            <person name="Prasad D."/>
            <person name="Martignago D."/>
            <person name="Bernet I.L."/>
            <person name="Trentin A.R."/>
            <person name="Renu I.K."/>
            <person name="Ferretti M."/>
            <person name="Masi A."/>
        </authorList>
    </citation>
    <scope>TISSUE SPECIFICITY</scope>
    <scope>INDUCTION BY GLUTATHIONE</scope>
    <scope>DISRUPTION PHENOTYPE</scope>
</reference>
<gene>
    <name type="primary">GGT2</name>
    <name type="ordered locus">At4g39650</name>
    <name type="ORF">T19P19.40</name>
</gene>
<accession>Q680I5</accession>
<accession>O65653</accession>